<feature type="chain" id="PRO_0000172841" description="Probable murein peptide carboxypeptidase">
    <location>
        <begin position="1"/>
        <end position="319"/>
    </location>
</feature>
<feature type="active site" description="Nucleophile" evidence="1">
    <location>
        <position position="116"/>
    </location>
</feature>
<feature type="active site" description="Charge relay system" evidence="1">
    <location>
        <position position="214"/>
    </location>
</feature>
<feature type="active site" description="Charge relay system" evidence="1">
    <location>
        <position position="284"/>
    </location>
</feature>
<comment type="function">
    <text evidence="1">May be involved in the degradation of peptidoglycan by catalyzing the cleavage of the terminal D-alanine residue from cytoplasmic murein peptides.</text>
</comment>
<comment type="pathway">
    <text>Cell wall degradation; peptidoglycan degradation.</text>
</comment>
<comment type="subcellular location">
    <subcellularLocation>
        <location evidence="1">Cytoplasm</location>
    </subcellularLocation>
</comment>
<comment type="induction">
    <text evidence="2">Repressed by AbrB, a transcription factor that negatively controls biofilm formation.</text>
</comment>
<comment type="similarity">
    <text evidence="3">Belongs to the peptidase S66 family.</text>
</comment>
<comment type="sequence caution" evidence="3">
    <conflict type="frameshift">
        <sequence resource="EMBL-CDS" id="CAA05577"/>
    </conflict>
</comment>
<organism>
    <name type="scientific">Bacillus subtilis (strain 168)</name>
    <dbReference type="NCBI Taxonomy" id="224308"/>
    <lineage>
        <taxon>Bacteria</taxon>
        <taxon>Bacillati</taxon>
        <taxon>Bacillota</taxon>
        <taxon>Bacilli</taxon>
        <taxon>Bacillales</taxon>
        <taxon>Bacillaceae</taxon>
        <taxon>Bacillus</taxon>
    </lineage>
</organism>
<keyword id="KW-0121">Carboxypeptidase</keyword>
<keyword id="KW-0961">Cell wall biogenesis/degradation</keyword>
<keyword id="KW-0963">Cytoplasm</keyword>
<keyword id="KW-0378">Hydrolase</keyword>
<keyword id="KW-0645">Protease</keyword>
<keyword id="KW-1185">Reference proteome</keyword>
<keyword id="KW-0720">Serine protease</keyword>
<name>LDC_BACSU</name>
<evidence type="ECO:0000250" key="1"/>
<evidence type="ECO:0000269" key="2">
    <source>
    </source>
</evidence>
<evidence type="ECO:0000305" key="3"/>
<sequence>MKGVFSLNYKPKALNKGDTVGVIAPASPPDPKKLDTALLFLEELGLQVKLGKALKNQHGYLAGQDDERLADLHEMFRDDEVKAVLCACGGFGTGRIAAGIDFSLIRKHPKIFWGYSDITFLHTAIHQNTGLVTFHGPMLSTDIGLDDVHPLTKASYKQLFQETEFTYTEELSPLTELVPGKAEGELVGGNLSLLTSTLGTPFEIDTRGKLLFIEDIDEEPYQIDRMLNQLKMGGKLTDAAGILVCDFHNCVPVKREKSLSLEQVLEDYIISAGRPALRGFKIGHCSPSIAVPIGAKAAMNTAEKTAVIEAGVSEGALKT</sequence>
<dbReference type="EC" id="3.4.16.-"/>
<dbReference type="EMBL" id="AJ002571">
    <property type="protein sequence ID" value="CAA05577.1"/>
    <property type="status" value="ALT_FRAME"/>
    <property type="molecule type" value="Genomic_DNA"/>
</dbReference>
<dbReference type="EMBL" id="AL009126">
    <property type="protein sequence ID" value="CAB13154.2"/>
    <property type="molecule type" value="Genomic_DNA"/>
</dbReference>
<dbReference type="PIR" id="G69855">
    <property type="entry name" value="G69855"/>
</dbReference>
<dbReference type="RefSeq" id="WP_009967072.1">
    <property type="nucleotide sequence ID" value="NZ_OZ025638.1"/>
</dbReference>
<dbReference type="SMR" id="O34851"/>
<dbReference type="FunCoup" id="O34851">
    <property type="interactions" value="159"/>
</dbReference>
<dbReference type="STRING" id="224308.BSU12970"/>
<dbReference type="MEROPS" id="S66.001"/>
<dbReference type="PaxDb" id="224308-BSU12970"/>
<dbReference type="EnsemblBacteria" id="CAB13154">
    <property type="protein sequence ID" value="CAB13154"/>
    <property type="gene ID" value="BSU_12970"/>
</dbReference>
<dbReference type="GeneID" id="938175"/>
<dbReference type="KEGG" id="bsu:BSU12970"/>
<dbReference type="PATRIC" id="fig|224308.179.peg.1409"/>
<dbReference type="eggNOG" id="COG1619">
    <property type="taxonomic scope" value="Bacteria"/>
</dbReference>
<dbReference type="InParanoid" id="O34851"/>
<dbReference type="OrthoDB" id="9807329at2"/>
<dbReference type="PhylomeDB" id="O34851"/>
<dbReference type="BioCyc" id="BSUB:BSU12970-MONOMER"/>
<dbReference type="UniPathway" id="UPA00549"/>
<dbReference type="Proteomes" id="UP000001570">
    <property type="component" value="Chromosome"/>
</dbReference>
<dbReference type="GO" id="GO:0005829">
    <property type="term" value="C:cytosol"/>
    <property type="evidence" value="ECO:0000318"/>
    <property type="project" value="GO_Central"/>
</dbReference>
<dbReference type="GO" id="GO:0004180">
    <property type="term" value="F:carboxypeptidase activity"/>
    <property type="evidence" value="ECO:0000318"/>
    <property type="project" value="GO_Central"/>
</dbReference>
<dbReference type="GO" id="GO:0008236">
    <property type="term" value="F:serine-type peptidase activity"/>
    <property type="evidence" value="ECO:0007669"/>
    <property type="project" value="UniProtKB-KW"/>
</dbReference>
<dbReference type="GO" id="GO:0016998">
    <property type="term" value="P:cell wall macromolecule catabolic process"/>
    <property type="evidence" value="ECO:0007669"/>
    <property type="project" value="UniProtKB-UniPathway"/>
</dbReference>
<dbReference type="GO" id="GO:0071555">
    <property type="term" value="P:cell wall organization"/>
    <property type="evidence" value="ECO:0007669"/>
    <property type="project" value="UniProtKB-KW"/>
</dbReference>
<dbReference type="GO" id="GO:0006508">
    <property type="term" value="P:proteolysis"/>
    <property type="evidence" value="ECO:0007669"/>
    <property type="project" value="UniProtKB-KW"/>
</dbReference>
<dbReference type="CDD" id="cd07025">
    <property type="entry name" value="Peptidase_S66"/>
    <property type="match status" value="1"/>
</dbReference>
<dbReference type="Gene3D" id="3.40.50.10740">
    <property type="entry name" value="Class I glutamine amidotransferase-like"/>
    <property type="match status" value="1"/>
</dbReference>
<dbReference type="Gene3D" id="3.50.30.60">
    <property type="entry name" value="LD-carboxypeptidase A C-terminal domain-like"/>
    <property type="match status" value="1"/>
</dbReference>
<dbReference type="InterPro" id="IPR027461">
    <property type="entry name" value="Carboxypeptidase_A_C_sf"/>
</dbReference>
<dbReference type="InterPro" id="IPR029062">
    <property type="entry name" value="Class_I_gatase-like"/>
</dbReference>
<dbReference type="InterPro" id="IPR027478">
    <property type="entry name" value="LdcA_N"/>
</dbReference>
<dbReference type="InterPro" id="IPR040449">
    <property type="entry name" value="Peptidase_S66_N"/>
</dbReference>
<dbReference type="InterPro" id="IPR040921">
    <property type="entry name" value="Peptidase_S66C"/>
</dbReference>
<dbReference type="InterPro" id="IPR003507">
    <property type="entry name" value="S66_fam"/>
</dbReference>
<dbReference type="PANTHER" id="PTHR30237">
    <property type="entry name" value="MURAMOYLTETRAPEPTIDE CARBOXYPEPTIDASE"/>
    <property type="match status" value="1"/>
</dbReference>
<dbReference type="PANTHER" id="PTHR30237:SF2">
    <property type="entry name" value="MUREIN TETRAPEPTIDE CARBOXYPEPTIDASE"/>
    <property type="match status" value="1"/>
</dbReference>
<dbReference type="Pfam" id="PF02016">
    <property type="entry name" value="Peptidase_S66"/>
    <property type="match status" value="1"/>
</dbReference>
<dbReference type="Pfam" id="PF17676">
    <property type="entry name" value="Peptidase_S66C"/>
    <property type="match status" value="1"/>
</dbReference>
<dbReference type="PIRSF" id="PIRSF028757">
    <property type="entry name" value="LD-carboxypeptidase"/>
    <property type="match status" value="1"/>
</dbReference>
<dbReference type="SUPFAM" id="SSF52317">
    <property type="entry name" value="Class I glutamine amidotransferase-like"/>
    <property type="match status" value="1"/>
</dbReference>
<dbReference type="SUPFAM" id="SSF141986">
    <property type="entry name" value="LD-carboxypeptidase A C-terminal domain-like"/>
    <property type="match status" value="1"/>
</dbReference>
<gene>
    <name type="primary">ykfA</name>
    <name type="ordered locus">BSU12970</name>
</gene>
<protein>
    <recommendedName>
        <fullName>Probable murein peptide carboxypeptidase</fullName>
        <ecNumber>3.4.16.-</ecNumber>
    </recommendedName>
    <alternativeName>
        <fullName>LD-carboxypeptidase</fullName>
    </alternativeName>
</protein>
<reference key="1">
    <citation type="submission" date="1997-11" db="EMBL/GenBank/DDBJ databases">
        <title>Sequence of the Bacillus subtilis genome between xlyA and ykoR.</title>
        <authorList>
            <person name="Devine K.M."/>
        </authorList>
    </citation>
    <scope>NUCLEOTIDE SEQUENCE [GENOMIC DNA]</scope>
    <source>
        <strain>168</strain>
    </source>
</reference>
<reference key="2">
    <citation type="journal article" date="1997" name="Nature">
        <title>The complete genome sequence of the Gram-positive bacterium Bacillus subtilis.</title>
        <authorList>
            <person name="Kunst F."/>
            <person name="Ogasawara N."/>
            <person name="Moszer I."/>
            <person name="Albertini A.M."/>
            <person name="Alloni G."/>
            <person name="Azevedo V."/>
            <person name="Bertero M.G."/>
            <person name="Bessieres P."/>
            <person name="Bolotin A."/>
            <person name="Borchert S."/>
            <person name="Borriss R."/>
            <person name="Boursier L."/>
            <person name="Brans A."/>
            <person name="Braun M."/>
            <person name="Brignell S.C."/>
            <person name="Bron S."/>
            <person name="Brouillet S."/>
            <person name="Bruschi C.V."/>
            <person name="Caldwell B."/>
            <person name="Capuano V."/>
            <person name="Carter N.M."/>
            <person name="Choi S.-K."/>
            <person name="Codani J.-J."/>
            <person name="Connerton I.F."/>
            <person name="Cummings N.J."/>
            <person name="Daniel R.A."/>
            <person name="Denizot F."/>
            <person name="Devine K.M."/>
            <person name="Duesterhoeft A."/>
            <person name="Ehrlich S.D."/>
            <person name="Emmerson P.T."/>
            <person name="Entian K.-D."/>
            <person name="Errington J."/>
            <person name="Fabret C."/>
            <person name="Ferrari E."/>
            <person name="Foulger D."/>
            <person name="Fritz C."/>
            <person name="Fujita M."/>
            <person name="Fujita Y."/>
            <person name="Fuma S."/>
            <person name="Galizzi A."/>
            <person name="Galleron N."/>
            <person name="Ghim S.-Y."/>
            <person name="Glaser P."/>
            <person name="Goffeau A."/>
            <person name="Golightly E.J."/>
            <person name="Grandi G."/>
            <person name="Guiseppi G."/>
            <person name="Guy B.J."/>
            <person name="Haga K."/>
            <person name="Haiech J."/>
            <person name="Harwood C.R."/>
            <person name="Henaut A."/>
            <person name="Hilbert H."/>
            <person name="Holsappel S."/>
            <person name="Hosono S."/>
            <person name="Hullo M.-F."/>
            <person name="Itaya M."/>
            <person name="Jones L.-M."/>
            <person name="Joris B."/>
            <person name="Karamata D."/>
            <person name="Kasahara Y."/>
            <person name="Klaerr-Blanchard M."/>
            <person name="Klein C."/>
            <person name="Kobayashi Y."/>
            <person name="Koetter P."/>
            <person name="Koningstein G."/>
            <person name="Krogh S."/>
            <person name="Kumano M."/>
            <person name="Kurita K."/>
            <person name="Lapidus A."/>
            <person name="Lardinois S."/>
            <person name="Lauber J."/>
            <person name="Lazarevic V."/>
            <person name="Lee S.-M."/>
            <person name="Levine A."/>
            <person name="Liu H."/>
            <person name="Masuda S."/>
            <person name="Mauel C."/>
            <person name="Medigue C."/>
            <person name="Medina N."/>
            <person name="Mellado R.P."/>
            <person name="Mizuno M."/>
            <person name="Moestl D."/>
            <person name="Nakai S."/>
            <person name="Noback M."/>
            <person name="Noone D."/>
            <person name="O'Reilly M."/>
            <person name="Ogawa K."/>
            <person name="Ogiwara A."/>
            <person name="Oudega B."/>
            <person name="Park S.-H."/>
            <person name="Parro V."/>
            <person name="Pohl T.M."/>
            <person name="Portetelle D."/>
            <person name="Porwollik S."/>
            <person name="Prescott A.M."/>
            <person name="Presecan E."/>
            <person name="Pujic P."/>
            <person name="Purnelle B."/>
            <person name="Rapoport G."/>
            <person name="Rey M."/>
            <person name="Reynolds S."/>
            <person name="Rieger M."/>
            <person name="Rivolta C."/>
            <person name="Rocha E."/>
            <person name="Roche B."/>
            <person name="Rose M."/>
            <person name="Sadaie Y."/>
            <person name="Sato T."/>
            <person name="Scanlan E."/>
            <person name="Schleich S."/>
            <person name="Schroeter R."/>
            <person name="Scoffone F."/>
            <person name="Sekiguchi J."/>
            <person name="Sekowska A."/>
            <person name="Seror S.J."/>
            <person name="Serror P."/>
            <person name="Shin B.-S."/>
            <person name="Soldo B."/>
            <person name="Sorokin A."/>
            <person name="Tacconi E."/>
            <person name="Takagi T."/>
            <person name="Takahashi H."/>
            <person name="Takemaru K."/>
            <person name="Takeuchi M."/>
            <person name="Tamakoshi A."/>
            <person name="Tanaka T."/>
            <person name="Terpstra P."/>
            <person name="Tognoni A."/>
            <person name="Tosato V."/>
            <person name="Uchiyama S."/>
            <person name="Vandenbol M."/>
            <person name="Vannier F."/>
            <person name="Vassarotti A."/>
            <person name="Viari A."/>
            <person name="Wambutt R."/>
            <person name="Wedler E."/>
            <person name="Wedler H."/>
            <person name="Weitzenegger T."/>
            <person name="Winters P."/>
            <person name="Wipat A."/>
            <person name="Yamamoto H."/>
            <person name="Yamane K."/>
            <person name="Yasumoto K."/>
            <person name="Yata K."/>
            <person name="Yoshida K."/>
            <person name="Yoshikawa H.-F."/>
            <person name="Zumstein E."/>
            <person name="Yoshikawa H."/>
            <person name="Danchin A."/>
        </authorList>
    </citation>
    <scope>NUCLEOTIDE SEQUENCE [LARGE SCALE GENOMIC DNA]</scope>
    <source>
        <strain>168</strain>
    </source>
</reference>
<reference key="3">
    <citation type="journal article" date="2009" name="Microbiology">
        <title>From a consortium sequence to a unified sequence: the Bacillus subtilis 168 reference genome a decade later.</title>
        <authorList>
            <person name="Barbe V."/>
            <person name="Cruveiller S."/>
            <person name="Kunst F."/>
            <person name="Lenoble P."/>
            <person name="Meurice G."/>
            <person name="Sekowska A."/>
            <person name="Vallenet D."/>
            <person name="Wang T."/>
            <person name="Moszer I."/>
            <person name="Medigue C."/>
            <person name="Danchin A."/>
        </authorList>
    </citation>
    <scope>SEQUENCE REVISION TO N-TERMINUS</scope>
</reference>
<reference key="4">
    <citation type="journal article" date="2004" name="Mol. Microbiol.">
        <title>Identification of AbrB-regulated genes involved in biofilm formation by Bacillus subtilis.</title>
        <authorList>
            <person name="Hamon M.A."/>
            <person name="Stanley N.R."/>
            <person name="Britton R.A."/>
            <person name="Grossman A.D."/>
            <person name="Lazazzera B.A."/>
        </authorList>
    </citation>
    <scope>INDUCTION</scope>
</reference>
<proteinExistence type="evidence at transcript level"/>
<accession>O34851</accession>